<evidence type="ECO:0000255" key="1">
    <source>
        <dbReference type="PROSITE-ProRule" id="PRU00303"/>
    </source>
</evidence>
<evidence type="ECO:0000305" key="2"/>
<protein>
    <recommendedName>
        <fullName>Uncharacterized lipoprotein MT2662</fullName>
    </recommendedName>
</protein>
<feature type="signal peptide" evidence="1">
    <location>
        <begin position="1"/>
        <end position="30"/>
    </location>
</feature>
<feature type="chain" id="PRO_0000427527" description="Uncharacterized lipoprotein MT2662">
    <location>
        <begin position="31"/>
        <end position="557"/>
    </location>
</feature>
<feature type="lipid moiety-binding region" description="N-palmitoyl cysteine" evidence="2">
    <location>
        <position position="31"/>
    </location>
</feature>
<feature type="lipid moiety-binding region" description="S-diacylglycerol cysteine" evidence="2">
    <location>
        <position position="31"/>
    </location>
</feature>
<accession>P9WL76</accession>
<accession>L0TAB1</accession>
<accession>Q50636</accession>
<gene>
    <name type="ordered locus">MT2662</name>
</gene>
<organism>
    <name type="scientific">Mycobacterium tuberculosis (strain CDC 1551 / Oshkosh)</name>
    <dbReference type="NCBI Taxonomy" id="83331"/>
    <lineage>
        <taxon>Bacteria</taxon>
        <taxon>Bacillati</taxon>
        <taxon>Actinomycetota</taxon>
        <taxon>Actinomycetes</taxon>
        <taxon>Mycobacteriales</taxon>
        <taxon>Mycobacteriaceae</taxon>
        <taxon>Mycobacterium</taxon>
        <taxon>Mycobacterium tuberculosis complex</taxon>
    </lineage>
</organism>
<reference key="1">
    <citation type="journal article" date="2002" name="J. Bacteriol.">
        <title>Whole-genome comparison of Mycobacterium tuberculosis clinical and laboratory strains.</title>
        <authorList>
            <person name="Fleischmann R.D."/>
            <person name="Alland D."/>
            <person name="Eisen J.A."/>
            <person name="Carpenter L."/>
            <person name="White O."/>
            <person name="Peterson J.D."/>
            <person name="DeBoy R.T."/>
            <person name="Dodson R.J."/>
            <person name="Gwinn M.L."/>
            <person name="Haft D.H."/>
            <person name="Hickey E.K."/>
            <person name="Kolonay J.F."/>
            <person name="Nelson W.C."/>
            <person name="Umayam L.A."/>
            <person name="Ermolaeva M.D."/>
            <person name="Salzberg S.L."/>
            <person name="Delcher A."/>
            <person name="Utterback T.R."/>
            <person name="Weidman J.F."/>
            <person name="Khouri H.M."/>
            <person name="Gill J."/>
            <person name="Mikula A."/>
            <person name="Bishai W."/>
            <person name="Jacobs W.R. Jr."/>
            <person name="Venter J.C."/>
            <person name="Fraser C.M."/>
        </authorList>
    </citation>
    <scope>NUCLEOTIDE SEQUENCE [LARGE SCALE GENOMIC DNA]</scope>
    <source>
        <strain>CDC 1551 / Oshkosh</strain>
    </source>
</reference>
<dbReference type="EMBL" id="AE000516">
    <property type="protein sequence ID" value="AAK46975.1"/>
    <property type="molecule type" value="Genomic_DNA"/>
</dbReference>
<dbReference type="PIR" id="H70725">
    <property type="entry name" value="H70725"/>
</dbReference>
<dbReference type="RefSeq" id="WP_003413373.1">
    <property type="nucleotide sequence ID" value="NZ_KK341227.1"/>
</dbReference>
<dbReference type="SMR" id="P9WL76"/>
<dbReference type="KEGG" id="mtc:MT2662"/>
<dbReference type="PATRIC" id="fig|83331.31.peg.2869"/>
<dbReference type="HOGENOM" id="CLU_017028_11_2_11"/>
<dbReference type="Proteomes" id="UP000001020">
    <property type="component" value="Chromosome"/>
</dbReference>
<dbReference type="GO" id="GO:0005886">
    <property type="term" value="C:plasma membrane"/>
    <property type="evidence" value="ECO:0007669"/>
    <property type="project" value="UniProtKB-SubCell"/>
</dbReference>
<dbReference type="GO" id="GO:1904680">
    <property type="term" value="F:peptide transmembrane transporter activity"/>
    <property type="evidence" value="ECO:0007669"/>
    <property type="project" value="TreeGrafter"/>
</dbReference>
<dbReference type="GO" id="GO:0015833">
    <property type="term" value="P:peptide transport"/>
    <property type="evidence" value="ECO:0007669"/>
    <property type="project" value="TreeGrafter"/>
</dbReference>
<dbReference type="FunFam" id="3.90.76.10:FF:000016">
    <property type="entry name" value="Possible conserved lipoprotein"/>
    <property type="match status" value="1"/>
</dbReference>
<dbReference type="Gene3D" id="3.90.76.10">
    <property type="entry name" value="Dipeptide-binding Protein, Domain 1"/>
    <property type="match status" value="1"/>
</dbReference>
<dbReference type="Gene3D" id="3.10.105.10">
    <property type="entry name" value="Dipeptide-binding Protein, Domain 3"/>
    <property type="match status" value="1"/>
</dbReference>
<dbReference type="Gene3D" id="3.40.190.10">
    <property type="entry name" value="Periplasmic binding protein-like II"/>
    <property type="match status" value="1"/>
</dbReference>
<dbReference type="InterPro" id="IPR039424">
    <property type="entry name" value="SBP_5"/>
</dbReference>
<dbReference type="InterPro" id="IPR000914">
    <property type="entry name" value="SBP_5_dom"/>
</dbReference>
<dbReference type="PANTHER" id="PTHR30290:SF65">
    <property type="entry name" value="MONOACYL PHOSPHATIDYLINOSITOL TETRAMANNOSIDE-BINDING PROTEIN LPQW-RELATED"/>
    <property type="match status" value="1"/>
</dbReference>
<dbReference type="PANTHER" id="PTHR30290">
    <property type="entry name" value="PERIPLASMIC BINDING COMPONENT OF ABC TRANSPORTER"/>
    <property type="match status" value="1"/>
</dbReference>
<dbReference type="Pfam" id="PF00496">
    <property type="entry name" value="SBP_bac_5"/>
    <property type="match status" value="1"/>
</dbReference>
<dbReference type="SUPFAM" id="SSF53850">
    <property type="entry name" value="Periplasmic binding protein-like II"/>
    <property type="match status" value="1"/>
</dbReference>
<dbReference type="PROSITE" id="PS51257">
    <property type="entry name" value="PROKAR_LIPOPROTEIN"/>
    <property type="match status" value="1"/>
</dbReference>
<sequence length="557" mass="58619">MAPRRRRHTRIAGLRVVGTATLVAATTLTACSGSAAAQIDYVVDGALVTYNTNTVIGAASAGAQAFARTLTGFGYHGPDGQVVADRDFGTVSVVEGSPLILDYQISDDAVYSDGRPVTCDDLVLAWAAQSGRFPGFDAATQAGYVDIANIECTAGQKKARVSFIPDRSVVDHSQLFTATSLMPSHVIADQLHIDVTAALLSNNVSAVEQIARLWNSTWDLKPGRSHDEVRSRFPSSGPYKIESVLDDGAVVLVANDRWWGTKAITKRITVWPQGADIQDRVNNRSVDVVDVAAGSSGSLVTPDSYQRTDYPSAGIEQLIFAPQGSLAQSRTRRALALCVPRDAIARDAGVPIANSRLSPATDDALTDADGAAEARQFGRVDPAAARDALGGTPLTVRIGYGRPNARLAATIGTIADACAPAGITVSDVTVDTPGPQALRDGKIDVLLASTGGATGSGSSGSSAMDAYDLHSGNGNNLSGYANAQIDGIISALAVSADPAERARLLAEAAPVLWDEMPTLPLYRQQRTLLMSTKMYAVSRNPTRWGAGWNMDRWALAR</sequence>
<keyword id="KW-1003">Cell membrane</keyword>
<keyword id="KW-0449">Lipoprotein</keyword>
<keyword id="KW-0472">Membrane</keyword>
<keyword id="KW-0564">Palmitate</keyword>
<keyword id="KW-1185">Reference proteome</keyword>
<keyword id="KW-0732">Signal</keyword>
<name>Y2585_MYCTO</name>
<proteinExistence type="inferred from homology"/>
<comment type="subcellular location">
    <subcellularLocation>
        <location evidence="2">Cell membrane</location>
        <topology evidence="2">Lipid-anchor</topology>
    </subcellularLocation>
</comment>
<comment type="similarity">
    <text evidence="2">To M.bovis Mb2616c and M.leprae ML0489.</text>
</comment>